<name>MDHG_ORYSJ</name>
<feature type="transit peptide" description="Glyoxysome" evidence="3">
    <location>
        <begin position="1"/>
        <end position="36"/>
    </location>
</feature>
<feature type="chain" id="PRO_0000018640" description="Malate dehydrogenase, glyoxysomal">
    <location>
        <begin position="37"/>
        <end position="356"/>
    </location>
</feature>
<feature type="active site" description="Proton acceptor" evidence="1">
    <location>
        <position position="220"/>
    </location>
</feature>
<feature type="binding site" evidence="1">
    <location>
        <begin position="51"/>
        <end position="57"/>
    </location>
    <ligand>
        <name>NAD(+)</name>
        <dbReference type="ChEBI" id="CHEBI:57540"/>
    </ligand>
</feature>
<feature type="binding site" evidence="1">
    <location>
        <position position="77"/>
    </location>
    <ligand>
        <name>NAD(+)</name>
        <dbReference type="ChEBI" id="CHEBI:57540"/>
    </ligand>
</feature>
<feature type="binding site" evidence="2">
    <location>
        <position position="124"/>
    </location>
    <ligand>
        <name>substrate</name>
    </ligand>
</feature>
<feature type="binding site" evidence="2">
    <location>
        <position position="130"/>
    </location>
    <ligand>
        <name>substrate</name>
    </ligand>
</feature>
<feature type="binding site" evidence="1">
    <location>
        <position position="137"/>
    </location>
    <ligand>
        <name>NAD(+)</name>
        <dbReference type="ChEBI" id="CHEBI:57540"/>
    </ligand>
</feature>
<feature type="binding site" evidence="1">
    <location>
        <begin position="160"/>
        <end position="162"/>
    </location>
    <ligand>
        <name>NAD(+)</name>
        <dbReference type="ChEBI" id="CHEBI:57540"/>
    </ligand>
</feature>
<feature type="binding site" evidence="2">
    <location>
        <position position="162"/>
    </location>
    <ligand>
        <name>substrate</name>
    </ligand>
</feature>
<feature type="binding site" evidence="2">
    <location>
        <position position="196"/>
    </location>
    <ligand>
        <name>substrate</name>
    </ligand>
</feature>
<feature type="binding site" evidence="1">
    <location>
        <position position="271"/>
    </location>
    <ligand>
        <name>NAD(+)</name>
        <dbReference type="ChEBI" id="CHEBI:57540"/>
    </ligand>
</feature>
<sequence length="356" mass="37385">MEDAAAAARRMERLASHLRPPASQMEESPLLRGSNCRAKGAAPGFKVAILGASGGIGQPLALLMKMNPLVSVLHLYDVVNTPGVTADISHMNTGAVVRGFLGQPQLENALTGMDLVIIPAGVPRKPGMTRDDLFNINAGIVRTLCEGIAKCCPNAIVNVISNPVNSTVPIAAEVFKKAGTYDPKRLLGVTTLDVVRANTFVAEVLGLDPRDVNVPVIGGHAGVTILPLLSQVNPPCSFTSEEISYLTTRIQNGGTEVVEAKAGAGSATLSMAYAASKFADACLRGLRGDAGIVECSFVASQVTELPFFASKVRLGRCGIEEILSLGPLNEFERAGLEKAKKELAESIQKGVAFINK</sequence>
<accession>Q42972</accession>
<accession>B7E6W8</accession>
<accession>Q2QLQ8</accession>
<accession>Q2QLQ9</accession>
<organism>
    <name type="scientific">Oryza sativa subsp. japonica</name>
    <name type="common">Rice</name>
    <dbReference type="NCBI Taxonomy" id="39947"/>
    <lineage>
        <taxon>Eukaryota</taxon>
        <taxon>Viridiplantae</taxon>
        <taxon>Streptophyta</taxon>
        <taxon>Embryophyta</taxon>
        <taxon>Tracheophyta</taxon>
        <taxon>Spermatophyta</taxon>
        <taxon>Magnoliopsida</taxon>
        <taxon>Liliopsida</taxon>
        <taxon>Poales</taxon>
        <taxon>Poaceae</taxon>
        <taxon>BOP clade</taxon>
        <taxon>Oryzoideae</taxon>
        <taxon>Oryzeae</taxon>
        <taxon>Oryzinae</taxon>
        <taxon>Oryza</taxon>
        <taxon>Oryza sativa</taxon>
    </lineage>
</organism>
<comment type="catalytic activity">
    <reaction evidence="2">
        <text>(S)-malate + NAD(+) = oxaloacetate + NADH + H(+)</text>
        <dbReference type="Rhea" id="RHEA:21432"/>
        <dbReference type="ChEBI" id="CHEBI:15378"/>
        <dbReference type="ChEBI" id="CHEBI:15589"/>
        <dbReference type="ChEBI" id="CHEBI:16452"/>
        <dbReference type="ChEBI" id="CHEBI:57540"/>
        <dbReference type="ChEBI" id="CHEBI:57945"/>
        <dbReference type="EC" id="1.1.1.37"/>
    </reaction>
</comment>
<comment type="subunit">
    <text>Homodimer.</text>
</comment>
<comment type="subcellular location">
    <subcellularLocation>
        <location>Glyoxysome</location>
    </subcellularLocation>
</comment>
<comment type="similarity">
    <text evidence="4">Belongs to the LDH/MDH superfamily. MDH type 1 family.</text>
</comment>
<comment type="sequence caution" evidence="4">
    <conflict type="erroneous gene model prediction">
        <sequence resource="EMBL-CDS" id="ABA99939"/>
    </conflict>
</comment>
<proteinExistence type="evidence at protein level"/>
<dbReference type="EC" id="1.1.1.37"/>
<dbReference type="EMBL" id="D85763">
    <property type="protein sequence ID" value="BAA12870.1"/>
    <property type="molecule type" value="mRNA"/>
</dbReference>
<dbReference type="EMBL" id="DP000011">
    <property type="protein sequence ID" value="ABA99938.2"/>
    <property type="molecule type" value="Genomic_DNA"/>
</dbReference>
<dbReference type="EMBL" id="DP000011">
    <property type="protein sequence ID" value="ABA99939.2"/>
    <property type="status" value="ALT_SEQ"/>
    <property type="molecule type" value="Genomic_DNA"/>
</dbReference>
<dbReference type="EMBL" id="AP008218">
    <property type="status" value="NOT_ANNOTATED_CDS"/>
    <property type="molecule type" value="Genomic_DNA"/>
</dbReference>
<dbReference type="EMBL" id="AP014968">
    <property type="protein sequence ID" value="BAT18226.1"/>
    <property type="molecule type" value="Genomic_DNA"/>
</dbReference>
<dbReference type="EMBL" id="CM000149">
    <property type="protein sequence ID" value="EEE53658.1"/>
    <property type="molecule type" value="Genomic_DNA"/>
</dbReference>
<dbReference type="EMBL" id="AK061793">
    <property type="protein sequence ID" value="BAG88115.1"/>
    <property type="molecule type" value="mRNA"/>
</dbReference>
<dbReference type="EMBL" id="AK065955">
    <property type="protein sequence ID" value="BAG89751.1"/>
    <property type="molecule type" value="mRNA"/>
</dbReference>
<dbReference type="PIR" id="T03272">
    <property type="entry name" value="T03272"/>
</dbReference>
<dbReference type="RefSeq" id="XP_015620524.1">
    <property type="nucleotide sequence ID" value="XM_015765038.1"/>
</dbReference>
<dbReference type="SMR" id="Q42972"/>
<dbReference type="FunCoup" id="Q42972">
    <property type="interactions" value="2845"/>
</dbReference>
<dbReference type="STRING" id="39947.Q42972"/>
<dbReference type="PaxDb" id="39947-Q42972"/>
<dbReference type="EnsemblPlants" id="Os12t0632700-01">
    <property type="protein sequence ID" value="Os12t0632700-01"/>
    <property type="gene ID" value="Os12g0632700"/>
</dbReference>
<dbReference type="Gramene" id="Os12t0632700-01">
    <property type="protein sequence ID" value="Os12t0632700-01"/>
    <property type="gene ID" value="Os12g0632700"/>
</dbReference>
<dbReference type="eggNOG" id="KOG1494">
    <property type="taxonomic scope" value="Eukaryota"/>
</dbReference>
<dbReference type="HOGENOM" id="CLU_047181_0_2_1"/>
<dbReference type="InParanoid" id="Q42972"/>
<dbReference type="OMA" id="CEGITKC"/>
<dbReference type="OrthoDB" id="4069699at2759"/>
<dbReference type="Proteomes" id="UP000000763">
    <property type="component" value="Chromosome 12"/>
</dbReference>
<dbReference type="Proteomes" id="UP000007752">
    <property type="component" value="Chromosome 12"/>
</dbReference>
<dbReference type="Proteomes" id="UP000059680">
    <property type="component" value="Chromosome 12"/>
</dbReference>
<dbReference type="GO" id="GO:0005737">
    <property type="term" value="C:cytoplasm"/>
    <property type="evidence" value="ECO:0000318"/>
    <property type="project" value="GO_Central"/>
</dbReference>
<dbReference type="GO" id="GO:0009514">
    <property type="term" value="C:glyoxysome"/>
    <property type="evidence" value="ECO:0007669"/>
    <property type="project" value="UniProtKB-SubCell"/>
</dbReference>
<dbReference type="GO" id="GO:0030060">
    <property type="term" value="F:L-malate dehydrogenase (NAD+) activity"/>
    <property type="evidence" value="ECO:0000318"/>
    <property type="project" value="GO_Central"/>
</dbReference>
<dbReference type="GO" id="GO:0006097">
    <property type="term" value="P:glyoxylate cycle"/>
    <property type="evidence" value="ECO:0007669"/>
    <property type="project" value="UniProtKB-KW"/>
</dbReference>
<dbReference type="GO" id="GO:0006108">
    <property type="term" value="P:malate metabolic process"/>
    <property type="evidence" value="ECO:0007669"/>
    <property type="project" value="InterPro"/>
</dbReference>
<dbReference type="GO" id="GO:0006099">
    <property type="term" value="P:tricarboxylic acid cycle"/>
    <property type="evidence" value="ECO:0007669"/>
    <property type="project" value="UniProtKB-KW"/>
</dbReference>
<dbReference type="CDD" id="cd01337">
    <property type="entry name" value="MDH_glyoxysomal_mitochondrial"/>
    <property type="match status" value="1"/>
</dbReference>
<dbReference type="FunFam" id="3.40.50.720:FF:000013">
    <property type="entry name" value="Malate dehydrogenase"/>
    <property type="match status" value="1"/>
</dbReference>
<dbReference type="FunFam" id="3.90.110.10:FF:000001">
    <property type="entry name" value="Malate dehydrogenase"/>
    <property type="match status" value="1"/>
</dbReference>
<dbReference type="Gene3D" id="3.90.110.10">
    <property type="entry name" value="Lactate dehydrogenase/glycoside hydrolase, family 4, C-terminal"/>
    <property type="match status" value="1"/>
</dbReference>
<dbReference type="Gene3D" id="3.40.50.720">
    <property type="entry name" value="NAD(P)-binding Rossmann-like Domain"/>
    <property type="match status" value="1"/>
</dbReference>
<dbReference type="InterPro" id="IPR001557">
    <property type="entry name" value="L-lactate/malate_DH"/>
</dbReference>
<dbReference type="InterPro" id="IPR022383">
    <property type="entry name" value="Lactate/malate_DH_C"/>
</dbReference>
<dbReference type="InterPro" id="IPR001236">
    <property type="entry name" value="Lactate/malate_DH_N"/>
</dbReference>
<dbReference type="InterPro" id="IPR015955">
    <property type="entry name" value="Lactate_DH/Glyco_Ohase_4_C"/>
</dbReference>
<dbReference type="InterPro" id="IPR001252">
    <property type="entry name" value="Malate_DH_AS"/>
</dbReference>
<dbReference type="InterPro" id="IPR010097">
    <property type="entry name" value="Malate_DH_type1"/>
</dbReference>
<dbReference type="InterPro" id="IPR036291">
    <property type="entry name" value="NAD(P)-bd_dom_sf"/>
</dbReference>
<dbReference type="NCBIfam" id="TIGR01772">
    <property type="entry name" value="MDH_euk_gproteo"/>
    <property type="match status" value="1"/>
</dbReference>
<dbReference type="PANTHER" id="PTHR11540">
    <property type="entry name" value="MALATE AND LACTATE DEHYDROGENASE"/>
    <property type="match status" value="1"/>
</dbReference>
<dbReference type="PANTHER" id="PTHR11540:SF71">
    <property type="entry name" value="MALATE DEHYDROGENASE 1, PEROXISOMAL"/>
    <property type="match status" value="1"/>
</dbReference>
<dbReference type="Pfam" id="PF02866">
    <property type="entry name" value="Ldh_1_C"/>
    <property type="match status" value="1"/>
</dbReference>
<dbReference type="Pfam" id="PF00056">
    <property type="entry name" value="Ldh_1_N"/>
    <property type="match status" value="1"/>
</dbReference>
<dbReference type="PIRSF" id="PIRSF000102">
    <property type="entry name" value="Lac_mal_DH"/>
    <property type="match status" value="1"/>
</dbReference>
<dbReference type="SUPFAM" id="SSF56327">
    <property type="entry name" value="LDH C-terminal domain-like"/>
    <property type="match status" value="1"/>
</dbReference>
<dbReference type="SUPFAM" id="SSF51735">
    <property type="entry name" value="NAD(P)-binding Rossmann-fold domains"/>
    <property type="match status" value="1"/>
</dbReference>
<dbReference type="PROSITE" id="PS00068">
    <property type="entry name" value="MDH"/>
    <property type="match status" value="1"/>
</dbReference>
<protein>
    <recommendedName>
        <fullName>Malate dehydrogenase, glyoxysomal</fullName>
        <ecNumber>1.1.1.37</ecNumber>
    </recommendedName>
</protein>
<reference key="1">
    <citation type="online journal article" date="1998" name="Plant Gene Register">
        <title>Molecular cloning and characterization of a cDNA encoding Glyoxysomal malate dehydrogenase from rice (Oryza sativa L.).</title>
        <authorList>
            <person name="Kaminaka H."/>
            <person name="Morita S."/>
            <person name="Masumura T."/>
            <person name="Tanaka K."/>
        </authorList>
        <locator>PGR98-161</locator>
    </citation>
    <scope>NUCLEOTIDE SEQUENCE [MRNA]</scope>
    <source>
        <strain>cv. Nipponbare</strain>
    </source>
</reference>
<reference key="2">
    <citation type="journal article" date="2005" name="BMC Biol.">
        <title>The sequence of rice chromosomes 11 and 12, rich in disease resistance genes and recent gene duplications.</title>
        <authorList>
            <consortium name="The rice chromosomes 11 and 12 sequencing consortia"/>
        </authorList>
    </citation>
    <scope>NUCLEOTIDE SEQUENCE [LARGE SCALE GENOMIC DNA]</scope>
    <source>
        <strain>cv. Nipponbare</strain>
    </source>
</reference>
<reference key="3">
    <citation type="journal article" date="2005" name="Nature">
        <title>The map-based sequence of the rice genome.</title>
        <authorList>
            <consortium name="International rice genome sequencing project (IRGSP)"/>
        </authorList>
    </citation>
    <scope>NUCLEOTIDE SEQUENCE [LARGE SCALE GENOMIC DNA]</scope>
    <source>
        <strain>cv. Nipponbare</strain>
    </source>
</reference>
<reference key="4">
    <citation type="journal article" date="2008" name="Nucleic Acids Res.">
        <title>The rice annotation project database (RAP-DB): 2008 update.</title>
        <authorList>
            <consortium name="The rice annotation project (RAP)"/>
        </authorList>
    </citation>
    <scope>GENOME REANNOTATION</scope>
    <source>
        <strain>cv. Nipponbare</strain>
    </source>
</reference>
<reference key="5">
    <citation type="journal article" date="2013" name="Rice">
        <title>Improvement of the Oryza sativa Nipponbare reference genome using next generation sequence and optical map data.</title>
        <authorList>
            <person name="Kawahara Y."/>
            <person name="de la Bastide M."/>
            <person name="Hamilton J.P."/>
            <person name="Kanamori H."/>
            <person name="McCombie W.R."/>
            <person name="Ouyang S."/>
            <person name="Schwartz D.C."/>
            <person name="Tanaka T."/>
            <person name="Wu J."/>
            <person name="Zhou S."/>
            <person name="Childs K.L."/>
            <person name="Davidson R.M."/>
            <person name="Lin H."/>
            <person name="Quesada-Ocampo L."/>
            <person name="Vaillancourt B."/>
            <person name="Sakai H."/>
            <person name="Lee S.S."/>
            <person name="Kim J."/>
            <person name="Numa H."/>
            <person name="Itoh T."/>
            <person name="Buell C.R."/>
            <person name="Matsumoto T."/>
        </authorList>
    </citation>
    <scope>GENOME REANNOTATION</scope>
    <source>
        <strain>cv. Nipponbare</strain>
    </source>
</reference>
<reference key="6">
    <citation type="journal article" date="2005" name="PLoS Biol.">
        <title>The genomes of Oryza sativa: a history of duplications.</title>
        <authorList>
            <person name="Yu J."/>
            <person name="Wang J."/>
            <person name="Lin W."/>
            <person name="Li S."/>
            <person name="Li H."/>
            <person name="Zhou J."/>
            <person name="Ni P."/>
            <person name="Dong W."/>
            <person name="Hu S."/>
            <person name="Zeng C."/>
            <person name="Zhang J."/>
            <person name="Zhang Y."/>
            <person name="Li R."/>
            <person name="Xu Z."/>
            <person name="Li S."/>
            <person name="Li X."/>
            <person name="Zheng H."/>
            <person name="Cong L."/>
            <person name="Lin L."/>
            <person name="Yin J."/>
            <person name="Geng J."/>
            <person name="Li G."/>
            <person name="Shi J."/>
            <person name="Liu J."/>
            <person name="Lv H."/>
            <person name="Li J."/>
            <person name="Wang J."/>
            <person name="Deng Y."/>
            <person name="Ran L."/>
            <person name="Shi X."/>
            <person name="Wang X."/>
            <person name="Wu Q."/>
            <person name="Li C."/>
            <person name="Ren X."/>
            <person name="Wang J."/>
            <person name="Wang X."/>
            <person name="Li D."/>
            <person name="Liu D."/>
            <person name="Zhang X."/>
            <person name="Ji Z."/>
            <person name="Zhao W."/>
            <person name="Sun Y."/>
            <person name="Zhang Z."/>
            <person name="Bao J."/>
            <person name="Han Y."/>
            <person name="Dong L."/>
            <person name="Ji J."/>
            <person name="Chen P."/>
            <person name="Wu S."/>
            <person name="Liu J."/>
            <person name="Xiao Y."/>
            <person name="Bu D."/>
            <person name="Tan J."/>
            <person name="Yang L."/>
            <person name="Ye C."/>
            <person name="Zhang J."/>
            <person name="Xu J."/>
            <person name="Zhou Y."/>
            <person name="Yu Y."/>
            <person name="Zhang B."/>
            <person name="Zhuang S."/>
            <person name="Wei H."/>
            <person name="Liu B."/>
            <person name="Lei M."/>
            <person name="Yu H."/>
            <person name="Li Y."/>
            <person name="Xu H."/>
            <person name="Wei S."/>
            <person name="He X."/>
            <person name="Fang L."/>
            <person name="Zhang Z."/>
            <person name="Zhang Y."/>
            <person name="Huang X."/>
            <person name="Su Z."/>
            <person name="Tong W."/>
            <person name="Li J."/>
            <person name="Tong Z."/>
            <person name="Li S."/>
            <person name="Ye J."/>
            <person name="Wang L."/>
            <person name="Fang L."/>
            <person name="Lei T."/>
            <person name="Chen C.-S."/>
            <person name="Chen H.-C."/>
            <person name="Xu Z."/>
            <person name="Li H."/>
            <person name="Huang H."/>
            <person name="Zhang F."/>
            <person name="Xu H."/>
            <person name="Li N."/>
            <person name="Zhao C."/>
            <person name="Li S."/>
            <person name="Dong L."/>
            <person name="Huang Y."/>
            <person name="Li L."/>
            <person name="Xi Y."/>
            <person name="Qi Q."/>
            <person name="Li W."/>
            <person name="Zhang B."/>
            <person name="Hu W."/>
            <person name="Zhang Y."/>
            <person name="Tian X."/>
            <person name="Jiao Y."/>
            <person name="Liang X."/>
            <person name="Jin J."/>
            <person name="Gao L."/>
            <person name="Zheng W."/>
            <person name="Hao B."/>
            <person name="Liu S.-M."/>
            <person name="Wang W."/>
            <person name="Yuan L."/>
            <person name="Cao M."/>
            <person name="McDermott J."/>
            <person name="Samudrala R."/>
            <person name="Wang J."/>
            <person name="Wong G.K.-S."/>
            <person name="Yang H."/>
        </authorList>
    </citation>
    <scope>NUCLEOTIDE SEQUENCE [LARGE SCALE GENOMIC DNA]</scope>
    <source>
        <strain>cv. Nipponbare</strain>
    </source>
</reference>
<reference key="7">
    <citation type="journal article" date="2003" name="Science">
        <title>Collection, mapping, and annotation of over 28,000 cDNA clones from japonica rice.</title>
        <authorList>
            <consortium name="The rice full-length cDNA consortium"/>
        </authorList>
    </citation>
    <scope>NUCLEOTIDE SEQUENCE [LARGE SCALE MRNA]</scope>
    <source>
        <strain>cv. Nipponbare</strain>
    </source>
</reference>
<reference key="8">
    <citation type="journal article" date="2006" name="Proteomics">
        <title>Proteomic analysis of rice leaf, stem and root tissues during growth course.</title>
        <authorList>
            <person name="Nozu Y."/>
            <person name="Tsugita A."/>
            <person name="Kamijo K."/>
        </authorList>
    </citation>
    <scope>PROTEIN SEQUENCE [LARGE SCALE ANALYSIS] OF 37-43</scope>
    <scope>IDENTIFICATION BY MASS SPECTROMETRY</scope>
    <source>
        <strain>cv. Nipponbare</strain>
    </source>
</reference>
<gene>
    <name type="ordered locus">Os12g0632700</name>
    <name type="ordered locus">LOC_Os12g43630</name>
    <name evidence="5" type="ORF">OsJ_36976</name>
</gene>
<evidence type="ECO:0000250" key="1"/>
<evidence type="ECO:0000255" key="2">
    <source>
        <dbReference type="PROSITE-ProRule" id="PRU10004"/>
    </source>
</evidence>
<evidence type="ECO:0000269" key="3">
    <source>
    </source>
</evidence>
<evidence type="ECO:0000305" key="4"/>
<evidence type="ECO:0000312" key="5">
    <source>
        <dbReference type="EMBL" id="EEE53658.1"/>
    </source>
</evidence>
<keyword id="KW-0903">Direct protein sequencing</keyword>
<keyword id="KW-0329">Glyoxylate bypass</keyword>
<keyword id="KW-0330">Glyoxysome</keyword>
<keyword id="KW-0520">NAD</keyword>
<keyword id="KW-0560">Oxidoreductase</keyword>
<keyword id="KW-0576">Peroxisome</keyword>
<keyword id="KW-1185">Reference proteome</keyword>
<keyword id="KW-0809">Transit peptide</keyword>
<keyword id="KW-0816">Tricarboxylic acid cycle</keyword>